<name>IF2_LACPL</name>
<gene>
    <name evidence="2" type="primary">infB</name>
    <name type="ordered locus">lp_2040</name>
</gene>
<organism>
    <name type="scientific">Lactiplantibacillus plantarum (strain ATCC BAA-793 / NCIMB 8826 / WCFS1)</name>
    <name type="common">Lactobacillus plantarum</name>
    <dbReference type="NCBI Taxonomy" id="220668"/>
    <lineage>
        <taxon>Bacteria</taxon>
        <taxon>Bacillati</taxon>
        <taxon>Bacillota</taxon>
        <taxon>Bacilli</taxon>
        <taxon>Lactobacillales</taxon>
        <taxon>Lactobacillaceae</taxon>
        <taxon>Lactiplantibacillus</taxon>
    </lineage>
</organism>
<feature type="chain" id="PRO_0000137213" description="Translation initiation factor IF-2">
    <location>
        <begin position="1"/>
        <end position="858"/>
    </location>
</feature>
<feature type="domain" description="tr-type G">
    <location>
        <begin position="359"/>
        <end position="528"/>
    </location>
</feature>
<feature type="region of interest" description="Disordered" evidence="3">
    <location>
        <begin position="49"/>
        <end position="271"/>
    </location>
</feature>
<feature type="region of interest" description="G1" evidence="1">
    <location>
        <begin position="368"/>
        <end position="375"/>
    </location>
</feature>
<feature type="region of interest" description="G2" evidence="1">
    <location>
        <begin position="393"/>
        <end position="397"/>
    </location>
</feature>
<feature type="region of interest" description="G3" evidence="1">
    <location>
        <begin position="414"/>
        <end position="417"/>
    </location>
</feature>
<feature type="region of interest" description="G4" evidence="1">
    <location>
        <begin position="468"/>
        <end position="471"/>
    </location>
</feature>
<feature type="region of interest" description="G5" evidence="1">
    <location>
        <begin position="504"/>
        <end position="506"/>
    </location>
</feature>
<feature type="compositionally biased region" description="Low complexity" evidence="3">
    <location>
        <begin position="80"/>
        <end position="226"/>
    </location>
</feature>
<feature type="compositionally biased region" description="Basic residues" evidence="3">
    <location>
        <begin position="239"/>
        <end position="256"/>
    </location>
</feature>
<feature type="binding site" evidence="2">
    <location>
        <begin position="368"/>
        <end position="375"/>
    </location>
    <ligand>
        <name>GTP</name>
        <dbReference type="ChEBI" id="CHEBI:37565"/>
    </ligand>
</feature>
<feature type="binding site" evidence="2">
    <location>
        <begin position="414"/>
        <end position="418"/>
    </location>
    <ligand>
        <name>GTP</name>
        <dbReference type="ChEBI" id="CHEBI:37565"/>
    </ligand>
</feature>
<feature type="binding site" evidence="2">
    <location>
        <begin position="468"/>
        <end position="471"/>
    </location>
    <ligand>
        <name>GTP</name>
        <dbReference type="ChEBI" id="CHEBI:37565"/>
    </ligand>
</feature>
<keyword id="KW-0963">Cytoplasm</keyword>
<keyword id="KW-0342">GTP-binding</keyword>
<keyword id="KW-0396">Initiation factor</keyword>
<keyword id="KW-0547">Nucleotide-binding</keyword>
<keyword id="KW-0648">Protein biosynthesis</keyword>
<keyword id="KW-1185">Reference proteome</keyword>
<sequence length="858" mass="93662">MGKKRIYELAKELNVPSKQLIAQAQQLGFSVKNHMSTLGDSEARQLQGTTTVTHPKSQPAPAKTSRATQAVAKNVTRTANQQQSNSRHQQSGDYLNNNRNNNQNNSQSRNSNGNRSNNGGNRTNSNNGNRSANASRSNSARNNGGSNTNRSNNNNNNNRSNNNNRSNTSNNRTNSTGNRTNNGGQNRNNNRTTTNNNNNNSNRSNGSNNSSRNGSGRFGGSLNSNNNGGGRYRGGNNNNRRRNNRNNKSRNNKNQRIRQVNNKPAPVRKDKPLPETLVYTVGMNAQDLGKLLHREPAEIIKKLFMLGVAVNQNQSLDKDTIEILATDYGINAQEKVQVDVTDLDKFFDDEVNNTDNLAPRAPVVTVMGHVDHGKTTLLDQLRHTHVTEGEAGGITQAIGAYQVKHDGKVITFLDTPGHAAFTEMRARGADITDITVLVVAADDGVMPQTIEAINHAKAAKVPIIVAVNKIDKPGANPNHVMEQLTEYGLIPEDWGGDTIFVQISAKFGKNLDELLDMILLQSEVLELTANPKQNAAGSVLEASLDRGKGSTATLLVQQGTMHVGDPIVVGNTYGKVRTMTNDHGKRIKEAVPSTPIEITGLNDVPDAGDRFVVFDDEKTARDAGEQRAKQALMEERKQTAHVTLDNLFDSMKQGELKEVDVIIKADVQGSVEALAGSLRKIDVEGVRVNIIHTAVGAINESDVALAEASNAIIIGFNVRPTPQAKAQADTDDVDIRLHQVIYNAIDEIESAMKGMLEPTYKEEITGQAEIREIYKVSKIGTIGGGMVTDGVIHRDSGVRVIRDGVVIYDGKLASLRRFKDDVKEVKQGFELGLRIEDYNDIKVNDVIEAYVMKEVPVE</sequence>
<reference key="1">
    <citation type="journal article" date="2003" name="Proc. Natl. Acad. Sci. U.S.A.">
        <title>Complete genome sequence of Lactobacillus plantarum WCFS1.</title>
        <authorList>
            <person name="Kleerebezem M."/>
            <person name="Boekhorst J."/>
            <person name="van Kranenburg R."/>
            <person name="Molenaar D."/>
            <person name="Kuipers O.P."/>
            <person name="Leer R."/>
            <person name="Tarchini R."/>
            <person name="Peters S.A."/>
            <person name="Sandbrink H.M."/>
            <person name="Fiers M.W.E.J."/>
            <person name="Stiekema W."/>
            <person name="Klein Lankhorst R.M."/>
            <person name="Bron P.A."/>
            <person name="Hoffer S.M."/>
            <person name="Nierop Groot M.N."/>
            <person name="Kerkhoven R."/>
            <person name="De Vries M."/>
            <person name="Ursing B."/>
            <person name="De Vos W.M."/>
            <person name="Siezen R.J."/>
        </authorList>
    </citation>
    <scope>NUCLEOTIDE SEQUENCE [LARGE SCALE GENOMIC DNA]</scope>
    <source>
        <strain>ATCC BAA-793 / NCIMB 8826 / WCFS1</strain>
    </source>
</reference>
<reference key="2">
    <citation type="journal article" date="2012" name="J. Bacteriol.">
        <title>Complete resequencing and reannotation of the Lactobacillus plantarum WCFS1 genome.</title>
        <authorList>
            <person name="Siezen R.J."/>
            <person name="Francke C."/>
            <person name="Renckens B."/>
            <person name="Boekhorst J."/>
            <person name="Wels M."/>
            <person name="Kleerebezem M."/>
            <person name="van Hijum S.A."/>
        </authorList>
    </citation>
    <scope>NUCLEOTIDE SEQUENCE [LARGE SCALE GENOMIC DNA]</scope>
    <scope>GENOME REANNOTATION</scope>
    <source>
        <strain>ATCC BAA-793 / NCIMB 8826 / WCFS1</strain>
    </source>
</reference>
<protein>
    <recommendedName>
        <fullName evidence="2">Translation initiation factor IF-2</fullName>
    </recommendedName>
</protein>
<proteinExistence type="inferred from homology"/>
<evidence type="ECO:0000250" key="1"/>
<evidence type="ECO:0000255" key="2">
    <source>
        <dbReference type="HAMAP-Rule" id="MF_00100"/>
    </source>
</evidence>
<evidence type="ECO:0000256" key="3">
    <source>
        <dbReference type="SAM" id="MobiDB-lite"/>
    </source>
</evidence>
<dbReference type="EMBL" id="AL935263">
    <property type="protein sequence ID" value="CCC79286.1"/>
    <property type="molecule type" value="Genomic_DNA"/>
</dbReference>
<dbReference type="RefSeq" id="WP_011101641.1">
    <property type="nucleotide sequence ID" value="NC_004567.2"/>
</dbReference>
<dbReference type="RefSeq" id="YP_004889800.1">
    <property type="nucleotide sequence ID" value="NC_004567.2"/>
</dbReference>
<dbReference type="SMR" id="Q88VK7"/>
<dbReference type="STRING" id="220668.lp_2040"/>
<dbReference type="EnsemblBacteria" id="CCC79286">
    <property type="protein sequence ID" value="CCC79286"/>
    <property type="gene ID" value="lp_2040"/>
</dbReference>
<dbReference type="KEGG" id="lpl:lp_2040"/>
<dbReference type="PATRIC" id="fig|220668.9.peg.1725"/>
<dbReference type="eggNOG" id="COG0532">
    <property type="taxonomic scope" value="Bacteria"/>
</dbReference>
<dbReference type="HOGENOM" id="CLU_006301_5_0_9"/>
<dbReference type="OrthoDB" id="9811804at2"/>
<dbReference type="PhylomeDB" id="Q88VK7"/>
<dbReference type="Proteomes" id="UP000000432">
    <property type="component" value="Chromosome"/>
</dbReference>
<dbReference type="GO" id="GO:0005829">
    <property type="term" value="C:cytosol"/>
    <property type="evidence" value="ECO:0007669"/>
    <property type="project" value="TreeGrafter"/>
</dbReference>
<dbReference type="GO" id="GO:0005525">
    <property type="term" value="F:GTP binding"/>
    <property type="evidence" value="ECO:0007669"/>
    <property type="project" value="UniProtKB-KW"/>
</dbReference>
<dbReference type="GO" id="GO:0003924">
    <property type="term" value="F:GTPase activity"/>
    <property type="evidence" value="ECO:0007669"/>
    <property type="project" value="UniProtKB-UniRule"/>
</dbReference>
<dbReference type="GO" id="GO:0003743">
    <property type="term" value="F:translation initiation factor activity"/>
    <property type="evidence" value="ECO:0007669"/>
    <property type="project" value="UniProtKB-UniRule"/>
</dbReference>
<dbReference type="CDD" id="cd01887">
    <property type="entry name" value="IF2_eIF5B"/>
    <property type="match status" value="1"/>
</dbReference>
<dbReference type="CDD" id="cd03702">
    <property type="entry name" value="IF2_mtIF2_II"/>
    <property type="match status" value="1"/>
</dbReference>
<dbReference type="CDD" id="cd03692">
    <property type="entry name" value="mtIF2_IVc"/>
    <property type="match status" value="1"/>
</dbReference>
<dbReference type="FunFam" id="2.40.30.10:FF:000007">
    <property type="entry name" value="Translation initiation factor IF-2"/>
    <property type="match status" value="1"/>
</dbReference>
<dbReference type="FunFam" id="2.40.30.10:FF:000008">
    <property type="entry name" value="Translation initiation factor IF-2"/>
    <property type="match status" value="1"/>
</dbReference>
<dbReference type="FunFam" id="3.40.50.10050:FF:000001">
    <property type="entry name" value="Translation initiation factor IF-2"/>
    <property type="match status" value="1"/>
</dbReference>
<dbReference type="FunFam" id="3.40.50.300:FF:000019">
    <property type="entry name" value="Translation initiation factor IF-2"/>
    <property type="match status" value="1"/>
</dbReference>
<dbReference type="Gene3D" id="1.10.10.2480">
    <property type="match status" value="1"/>
</dbReference>
<dbReference type="Gene3D" id="3.40.50.300">
    <property type="entry name" value="P-loop containing nucleotide triphosphate hydrolases"/>
    <property type="match status" value="1"/>
</dbReference>
<dbReference type="Gene3D" id="2.40.30.10">
    <property type="entry name" value="Translation factors"/>
    <property type="match status" value="2"/>
</dbReference>
<dbReference type="Gene3D" id="3.40.50.10050">
    <property type="entry name" value="Translation initiation factor IF- 2, domain 3"/>
    <property type="match status" value="1"/>
</dbReference>
<dbReference type="HAMAP" id="MF_00100_B">
    <property type="entry name" value="IF_2_B"/>
    <property type="match status" value="1"/>
</dbReference>
<dbReference type="InterPro" id="IPR053905">
    <property type="entry name" value="EF-G-like_DII"/>
</dbReference>
<dbReference type="InterPro" id="IPR044145">
    <property type="entry name" value="IF2_II"/>
</dbReference>
<dbReference type="InterPro" id="IPR006847">
    <property type="entry name" value="IF2_N"/>
</dbReference>
<dbReference type="InterPro" id="IPR027417">
    <property type="entry name" value="P-loop_NTPase"/>
</dbReference>
<dbReference type="InterPro" id="IPR005225">
    <property type="entry name" value="Small_GTP-bd"/>
</dbReference>
<dbReference type="InterPro" id="IPR000795">
    <property type="entry name" value="T_Tr_GTP-bd_dom"/>
</dbReference>
<dbReference type="InterPro" id="IPR000178">
    <property type="entry name" value="TF_IF2_bacterial-like"/>
</dbReference>
<dbReference type="InterPro" id="IPR015760">
    <property type="entry name" value="TIF_IF2"/>
</dbReference>
<dbReference type="InterPro" id="IPR023115">
    <property type="entry name" value="TIF_IF2_dom3"/>
</dbReference>
<dbReference type="InterPro" id="IPR036925">
    <property type="entry name" value="TIF_IF2_dom3_sf"/>
</dbReference>
<dbReference type="InterPro" id="IPR009000">
    <property type="entry name" value="Transl_B-barrel_sf"/>
</dbReference>
<dbReference type="NCBIfam" id="TIGR00487">
    <property type="entry name" value="IF-2"/>
    <property type="match status" value="1"/>
</dbReference>
<dbReference type="NCBIfam" id="TIGR00231">
    <property type="entry name" value="small_GTP"/>
    <property type="match status" value="1"/>
</dbReference>
<dbReference type="PANTHER" id="PTHR43381:SF5">
    <property type="entry name" value="TR-TYPE G DOMAIN-CONTAINING PROTEIN"/>
    <property type="match status" value="1"/>
</dbReference>
<dbReference type="PANTHER" id="PTHR43381">
    <property type="entry name" value="TRANSLATION INITIATION FACTOR IF-2-RELATED"/>
    <property type="match status" value="1"/>
</dbReference>
<dbReference type="Pfam" id="PF22042">
    <property type="entry name" value="EF-G_D2"/>
    <property type="match status" value="1"/>
</dbReference>
<dbReference type="Pfam" id="PF00009">
    <property type="entry name" value="GTP_EFTU"/>
    <property type="match status" value="1"/>
</dbReference>
<dbReference type="Pfam" id="PF11987">
    <property type="entry name" value="IF-2"/>
    <property type="match status" value="1"/>
</dbReference>
<dbReference type="Pfam" id="PF04760">
    <property type="entry name" value="IF2_N"/>
    <property type="match status" value="2"/>
</dbReference>
<dbReference type="SUPFAM" id="SSF52156">
    <property type="entry name" value="Initiation factor IF2/eIF5b, domain 3"/>
    <property type="match status" value="1"/>
</dbReference>
<dbReference type="SUPFAM" id="SSF52540">
    <property type="entry name" value="P-loop containing nucleoside triphosphate hydrolases"/>
    <property type="match status" value="1"/>
</dbReference>
<dbReference type="SUPFAM" id="SSF50447">
    <property type="entry name" value="Translation proteins"/>
    <property type="match status" value="2"/>
</dbReference>
<dbReference type="PROSITE" id="PS51722">
    <property type="entry name" value="G_TR_2"/>
    <property type="match status" value="1"/>
</dbReference>
<comment type="function">
    <text evidence="2">One of the essential components for the initiation of protein synthesis. Protects formylmethionyl-tRNA from spontaneous hydrolysis and promotes its binding to the 30S ribosomal subunits. Also involved in the hydrolysis of GTP during the formation of the 70S ribosomal complex.</text>
</comment>
<comment type="subcellular location">
    <subcellularLocation>
        <location evidence="2">Cytoplasm</location>
    </subcellularLocation>
</comment>
<comment type="similarity">
    <text evidence="2">Belongs to the TRAFAC class translation factor GTPase superfamily. Classic translation factor GTPase family. IF-2 subfamily.</text>
</comment>
<accession>Q88VK7</accession>
<accession>F9UPZ7</accession>